<protein>
    <recommendedName>
        <fullName>Beta-lactoglobulin-1</fullName>
        <shortName>Beta-LG-1</shortName>
    </recommendedName>
    <alternativeName>
        <fullName>Beta-lactoglobulin I</fullName>
    </alternativeName>
</protein>
<proteinExistence type="evidence at protein level"/>
<name>LACB1_FELCA</name>
<sequence length="162" mass="18642">ATVPLTMDGLDLQKVAGMWHSMAMAASDISLLDSETAPLRVYVQELRPTPRDNLEIILRKWEDNRCVEKKVLAEKTECAAKFNINYLDENELIVLDTDYENYLFFCLENADAPDQNLVCQCLTRTLKADNEVMEKFDRALQTLPVHVRLFFDPTQVAEQCRI</sequence>
<reference key="1">
    <citation type="journal article" date="1993" name="Protein Seq. Data Anal.">
        <title>Feline beta-lactoglobulins I, II and III, and canine beta-lactoglobulins I and II: amino acid sequences provide evidence for the existence of more than one gene for beta-lactoglobulin in the cat and dog.</title>
        <authorList>
            <person name="Halliday J.A."/>
            <person name="Bell K."/>
            <person name="McAndrew K."/>
            <person name="Shaw D.C."/>
        </authorList>
    </citation>
    <scope>PROTEIN SEQUENCE</scope>
</reference>
<reference key="2">
    <citation type="journal article" date="1990" name="Comp. Biochem. Physiol.">
        <title>Feline whey proteins: identification, isolation and initial characterization of alpha-lactalbumin, beta-lactoglobulin and lysozyme.</title>
        <authorList>
            <person name="Halliday J.A."/>
            <person name="Bell K."/>
            <person name="McKenzie H.A."/>
            <person name="Shaw D.C."/>
        </authorList>
    </citation>
    <scope>PROTEIN SEQUENCE OF 1-24</scope>
    <source>
        <tissue>Milk</tissue>
    </source>
</reference>
<organism>
    <name type="scientific">Felis catus</name>
    <name type="common">Cat</name>
    <name type="synonym">Felis silvestris catus</name>
    <dbReference type="NCBI Taxonomy" id="9685"/>
    <lineage>
        <taxon>Eukaryota</taxon>
        <taxon>Metazoa</taxon>
        <taxon>Chordata</taxon>
        <taxon>Craniata</taxon>
        <taxon>Vertebrata</taxon>
        <taxon>Euteleostomi</taxon>
        <taxon>Mammalia</taxon>
        <taxon>Eutheria</taxon>
        <taxon>Laurasiatheria</taxon>
        <taxon>Carnivora</taxon>
        <taxon>Feliformia</taxon>
        <taxon>Felidae</taxon>
        <taxon>Felinae</taxon>
        <taxon>Felis</taxon>
    </lineage>
</organism>
<comment type="function">
    <text>Lactoglobulin is the primary component of whey, it binds retinol and is probably involved in the transport of that molecule.</text>
</comment>
<comment type="subunit">
    <text>Monomer.</text>
</comment>
<comment type="subcellular location">
    <subcellularLocation>
        <location>Secreted</location>
    </subcellularLocation>
</comment>
<comment type="similarity">
    <text evidence="2">Belongs to the calycin superfamily. Lipocalin family.</text>
</comment>
<feature type="chain" id="PRO_0000201017" description="Beta-lactoglobulin-1">
    <location>
        <begin position="1"/>
        <end position="162"/>
    </location>
</feature>
<feature type="disulfide bond" evidence="1">
    <location>
        <begin position="66"/>
        <end position="160"/>
    </location>
</feature>
<feature type="disulfide bond" evidence="1">
    <location>
        <begin position="106"/>
        <end position="119"/>
    </location>
</feature>
<dbReference type="PIR" id="S33875">
    <property type="entry name" value="S33875"/>
</dbReference>
<dbReference type="SMR" id="P33687"/>
<dbReference type="FunCoup" id="P33687">
    <property type="interactions" value="2"/>
</dbReference>
<dbReference type="STRING" id="9685.ENSFCAP00000019357"/>
<dbReference type="PaxDb" id="9685-ENSFCAP00000005330"/>
<dbReference type="eggNOG" id="ENOG502T0EI">
    <property type="taxonomic scope" value="Eukaryota"/>
</dbReference>
<dbReference type="InParanoid" id="P33687"/>
<dbReference type="Proteomes" id="UP000011712">
    <property type="component" value="Unplaced"/>
</dbReference>
<dbReference type="GO" id="GO:0005576">
    <property type="term" value="C:extracellular region"/>
    <property type="evidence" value="ECO:0007669"/>
    <property type="project" value="UniProtKB-SubCell"/>
</dbReference>
<dbReference type="GO" id="GO:0019841">
    <property type="term" value="F:retinol binding"/>
    <property type="evidence" value="ECO:0007669"/>
    <property type="project" value="UniProtKB-KW"/>
</dbReference>
<dbReference type="CDD" id="cd19416">
    <property type="entry name" value="lipocalin_beta-LG-like"/>
    <property type="match status" value="1"/>
</dbReference>
<dbReference type="Gene3D" id="2.40.128.20">
    <property type="match status" value="1"/>
</dbReference>
<dbReference type="InterPro" id="IPR002447">
    <property type="entry name" value="Blactoglobulin"/>
</dbReference>
<dbReference type="InterPro" id="IPR012674">
    <property type="entry name" value="Calycin"/>
</dbReference>
<dbReference type="InterPro" id="IPR002345">
    <property type="entry name" value="Lipocalin"/>
</dbReference>
<dbReference type="InterPro" id="IPR022272">
    <property type="entry name" value="Lipocalin_CS"/>
</dbReference>
<dbReference type="InterPro" id="IPR000566">
    <property type="entry name" value="Lipocln_cytosolic_FA-bd_dom"/>
</dbReference>
<dbReference type="PANTHER" id="PTHR11430:SF117">
    <property type="entry name" value="GLYCODELIN"/>
    <property type="match status" value="1"/>
</dbReference>
<dbReference type="PANTHER" id="PTHR11430">
    <property type="entry name" value="LIPOCALIN"/>
    <property type="match status" value="1"/>
</dbReference>
<dbReference type="Pfam" id="PF00061">
    <property type="entry name" value="Lipocalin"/>
    <property type="match status" value="1"/>
</dbReference>
<dbReference type="PRINTS" id="PR01172">
    <property type="entry name" value="BLCTOGLOBULN"/>
</dbReference>
<dbReference type="PRINTS" id="PR00179">
    <property type="entry name" value="LIPOCALIN"/>
</dbReference>
<dbReference type="SUPFAM" id="SSF50814">
    <property type="entry name" value="Lipocalins"/>
    <property type="match status" value="1"/>
</dbReference>
<dbReference type="PROSITE" id="PS00213">
    <property type="entry name" value="LIPOCALIN"/>
    <property type="match status" value="1"/>
</dbReference>
<keyword id="KW-0903">Direct protein sequencing</keyword>
<keyword id="KW-1015">Disulfide bond</keyword>
<keyword id="KW-0494">Milk protein</keyword>
<keyword id="KW-1185">Reference proteome</keyword>
<keyword id="KW-0683">Retinol-binding</keyword>
<keyword id="KW-0964">Secreted</keyword>
<keyword id="KW-0813">Transport</keyword>
<accession>P33687</accession>
<gene>
    <name type="primary">LGB1</name>
</gene>
<evidence type="ECO:0000250" key="1"/>
<evidence type="ECO:0000305" key="2"/>